<keyword id="KW-0067">ATP-binding</keyword>
<keyword id="KW-0347">Helicase</keyword>
<keyword id="KW-1043">Host membrane</keyword>
<keyword id="KW-0378">Hydrolase</keyword>
<keyword id="KW-0426">Late protein</keyword>
<keyword id="KW-0472">Membrane</keyword>
<keyword id="KW-0547">Nucleotide-binding</keyword>
<keyword id="KW-0812">Transmembrane</keyword>
<keyword id="KW-1133">Transmembrane helix</keyword>
<keyword id="KW-0946">Virion</keyword>
<organism>
    <name type="scientific">African swine fever virus (isolate Warthog/Namibia/Wart80/1980)</name>
    <name type="common">ASFV</name>
    <dbReference type="NCBI Taxonomy" id="561444"/>
    <lineage>
        <taxon>Viruses</taxon>
        <taxon>Varidnaviria</taxon>
        <taxon>Bamfordvirae</taxon>
        <taxon>Nucleocytoviricota</taxon>
        <taxon>Pokkesviricetes</taxon>
        <taxon>Asfuvirales</taxon>
        <taxon>Asfarviridae</taxon>
        <taxon>Asfivirus</taxon>
        <taxon>African swine fever virus</taxon>
    </lineage>
</organism>
<gene>
    <name type="ordered locus">War-082</name>
</gene>
<organismHost>
    <name type="scientific">Ornithodoros</name>
    <name type="common">relapsing fever ticks</name>
    <dbReference type="NCBI Taxonomy" id="6937"/>
</organismHost>
<organismHost>
    <name type="scientific">Phacochoerus aethiopicus</name>
    <name type="common">Warthog</name>
    <dbReference type="NCBI Taxonomy" id="85517"/>
</organismHost>
<organismHost>
    <name type="scientific">Phacochoerus africanus</name>
    <name type="common">Warthog</name>
    <dbReference type="NCBI Taxonomy" id="41426"/>
</organismHost>
<organismHost>
    <name type="scientific">Potamochoerus larvatus</name>
    <name type="common">Bushpig</name>
    <dbReference type="NCBI Taxonomy" id="273792"/>
</organismHost>
<organismHost>
    <name type="scientific">Sus scrofa</name>
    <name type="common">Pig</name>
    <dbReference type="NCBI Taxonomy" id="9823"/>
</organismHost>
<evidence type="ECO:0000250" key="1">
    <source>
        <dbReference type="UniProtKB" id="Q89443"/>
    </source>
</evidence>
<evidence type="ECO:0000255" key="2"/>
<evidence type="ECO:0000255" key="3">
    <source>
        <dbReference type="PROSITE-ProRule" id="PRU00541"/>
    </source>
</evidence>
<evidence type="ECO:0000255" key="4">
    <source>
        <dbReference type="PROSITE-ProRule" id="PRU00542"/>
    </source>
</evidence>
<evidence type="ECO:0000305" key="5"/>
<comment type="catalytic activity">
    <reaction>
        <text>ATP + H2O = ADP + phosphate + H(+)</text>
        <dbReference type="Rhea" id="RHEA:13065"/>
        <dbReference type="ChEBI" id="CHEBI:15377"/>
        <dbReference type="ChEBI" id="CHEBI:15378"/>
        <dbReference type="ChEBI" id="CHEBI:30616"/>
        <dbReference type="ChEBI" id="CHEBI:43474"/>
        <dbReference type="ChEBI" id="CHEBI:456216"/>
        <dbReference type="EC" id="3.6.4.13"/>
    </reaction>
</comment>
<comment type="subcellular location">
    <subcellularLocation>
        <location evidence="5">Host membrane</location>
        <topology evidence="5">Single-pass membrane protein</topology>
    </subcellularLocation>
    <subcellularLocation>
        <location evidence="1">Virion</location>
    </subcellularLocation>
</comment>
<comment type="induction">
    <text evidence="5">Expressed in the late phase of the viral replicative cycle.</text>
</comment>
<comment type="similarity">
    <text evidence="5">Belongs to the DEAD box helicase family. DEAH subfamily.</text>
</comment>
<protein>
    <recommendedName>
        <fullName>Putative RNA Helicase B962L</fullName>
        <ecNumber>3.6.4.13</ecNumber>
    </recommendedName>
</protein>
<sequence length="962" mass="109619">MGKPTLLEPGHLYNVPAEHKNDVPIHYIITWIKQRLPEFGGAIPTSLADRVLIIKSRTGSGKSTALPVHVFRILRNENTHSFQKYLGRSVICTQPRVLTAVTLAKDIGASTHYPDMILGQTVGYQTKPLTEKPNRGLIYATAGVLLAQLHTMTDDEIASRYAFMIIDEAHERALGIDLMLMYIKSMLERMLQRGSIGALRIPFVILTSATIDTHKYSTYFGIGKENIILVEGRQYGVETHWPLYNTNNYIKTACETALTIHKENIHDRPTEADILIFMPGMAEIRFLSMLLNNANMDLAKEKLPLMLILPIDSEAIAQENEAYLGLKAEIKNLWVKNPLTAKVEKPLRRVIVSTVVAETGLTIETLKYVIDPGWNRSIETYYPEWAGGLITRPAAQSRIEQRKGRVGRVFPGHFYPLYTKHVFEQIPAQQYPEIITEGPGAIFLSIVVETIKKNKEGVFKAEEIDMLDPPPTDALASAIERAIVAGLLTRGEKGLQLTQLGDIASRFSFLSIEEARMCFSGYFWQAAISDIATILAVVSVADKKLTNLLDSKQRNGAMLAEAVLAGIPPFLQNIDNAYTNIHLLLADDLLEGLFIFEGFQHAIVYFINNKVNNVAKHLREWCEKKMLKYSSMVQILARREDILNELAIVGLNPFHHWQNRLASANAETFLKRVCTLKQCMYEAYRLNCFCYDEHRLLYTGRNGIHFSYHDAVIKNPSCIVTPRIMLSPVSKQYMEWRLEPSFVSVLDGFVNVDINFLLPRQEIPNILGGVEDEEEEPPLPIQVFLHKYVKTHFHFSGKSFKELKMKPGQTIKFPETTLINMIPDIPKNVVQTYLEISVCHQYSFKRLIYCETFYTDMDDVQHENSVELIGLPMAAHHLTINDFNKLYHLLKPDGFLMVYDLHQSQEAFWLHSLQDALGHHTIRRDMDFHTIPEWETIFKECGFTPIFSKQPSEHELFIVFKK</sequence>
<reference key="1">
    <citation type="submission" date="2003-03" db="EMBL/GenBank/DDBJ databases">
        <title>African swine fever virus genomes.</title>
        <authorList>
            <person name="Kutish G.F."/>
            <person name="Rock D.L."/>
        </authorList>
    </citation>
    <scope>NUCLEOTIDE SEQUENCE [LARGE SCALE GENOMIC DNA]</scope>
</reference>
<feature type="chain" id="PRO_0000373105" description="Putative RNA Helicase B962L">
    <location>
        <begin position="1"/>
        <end position="962"/>
    </location>
</feature>
<feature type="transmembrane region" description="Helical" evidence="2">
    <location>
        <begin position="521"/>
        <end position="541"/>
    </location>
</feature>
<feature type="domain" description="Helicase ATP-binding" evidence="3">
    <location>
        <begin position="43"/>
        <end position="229"/>
    </location>
</feature>
<feature type="domain" description="Helicase C-terminal" evidence="4">
    <location>
        <begin position="253"/>
        <end position="459"/>
    </location>
</feature>
<feature type="short sequence motif" description="DEAH box">
    <location>
        <begin position="167"/>
        <end position="170"/>
    </location>
</feature>
<feature type="binding site" evidence="3">
    <location>
        <begin position="56"/>
        <end position="63"/>
    </location>
    <ligand>
        <name>ATP</name>
        <dbReference type="ChEBI" id="CHEBI:30616"/>
    </ligand>
</feature>
<proteinExistence type="inferred from homology"/>
<dbReference type="EC" id="3.6.4.13"/>
<dbReference type="EMBL" id="AY261366">
    <property type="status" value="NOT_ANNOTATED_CDS"/>
    <property type="molecule type" value="Genomic_DNA"/>
</dbReference>
<dbReference type="SMR" id="P0C9A3"/>
<dbReference type="Proteomes" id="UP000000858">
    <property type="component" value="Segment"/>
</dbReference>
<dbReference type="GO" id="GO:0033644">
    <property type="term" value="C:host cell membrane"/>
    <property type="evidence" value="ECO:0007669"/>
    <property type="project" value="UniProtKB-SubCell"/>
</dbReference>
<dbReference type="GO" id="GO:0016020">
    <property type="term" value="C:membrane"/>
    <property type="evidence" value="ECO:0007669"/>
    <property type="project" value="UniProtKB-KW"/>
</dbReference>
<dbReference type="GO" id="GO:0044423">
    <property type="term" value="C:virion component"/>
    <property type="evidence" value="ECO:0007669"/>
    <property type="project" value="UniProtKB-KW"/>
</dbReference>
<dbReference type="GO" id="GO:0005524">
    <property type="term" value="F:ATP binding"/>
    <property type="evidence" value="ECO:0007669"/>
    <property type="project" value="UniProtKB-KW"/>
</dbReference>
<dbReference type="GO" id="GO:0016887">
    <property type="term" value="F:ATP hydrolysis activity"/>
    <property type="evidence" value="ECO:0007669"/>
    <property type="project" value="RHEA"/>
</dbReference>
<dbReference type="GO" id="GO:0003723">
    <property type="term" value="F:RNA binding"/>
    <property type="evidence" value="ECO:0007669"/>
    <property type="project" value="TreeGrafter"/>
</dbReference>
<dbReference type="GO" id="GO:0003724">
    <property type="term" value="F:RNA helicase activity"/>
    <property type="evidence" value="ECO:0007669"/>
    <property type="project" value="UniProtKB-EC"/>
</dbReference>
<dbReference type="CDD" id="cd17917">
    <property type="entry name" value="DEXHc_RHA-like"/>
    <property type="match status" value="1"/>
</dbReference>
<dbReference type="Gene3D" id="3.40.50.300">
    <property type="entry name" value="P-loop containing nucleotide triphosphate hydrolases"/>
    <property type="match status" value="2"/>
</dbReference>
<dbReference type="Gene3D" id="3.40.50.150">
    <property type="entry name" value="Vaccinia Virus protein VP39"/>
    <property type="match status" value="1"/>
</dbReference>
<dbReference type="InterPro" id="IPR011545">
    <property type="entry name" value="DEAD/DEAH_box_helicase_dom"/>
</dbReference>
<dbReference type="InterPro" id="IPR002464">
    <property type="entry name" value="DNA/RNA_helicase_DEAH_CS"/>
</dbReference>
<dbReference type="InterPro" id="IPR014001">
    <property type="entry name" value="Helicase_ATP-bd"/>
</dbReference>
<dbReference type="InterPro" id="IPR001650">
    <property type="entry name" value="Helicase_C-like"/>
</dbReference>
<dbReference type="InterPro" id="IPR027417">
    <property type="entry name" value="P-loop_NTPase"/>
</dbReference>
<dbReference type="InterPro" id="IPR029063">
    <property type="entry name" value="SAM-dependent_MTases_sf"/>
</dbReference>
<dbReference type="PANTHER" id="PTHR18934">
    <property type="entry name" value="ATP-DEPENDENT RNA HELICASE"/>
    <property type="match status" value="1"/>
</dbReference>
<dbReference type="PANTHER" id="PTHR18934:SF91">
    <property type="entry name" value="PRE-MRNA-SPLICING FACTOR ATP-DEPENDENT RNA HELICASE PRP16"/>
    <property type="match status" value="1"/>
</dbReference>
<dbReference type="Pfam" id="PF00270">
    <property type="entry name" value="DEAD"/>
    <property type="match status" value="1"/>
</dbReference>
<dbReference type="SMART" id="SM00487">
    <property type="entry name" value="DEXDc"/>
    <property type="match status" value="1"/>
</dbReference>
<dbReference type="SMART" id="SM00490">
    <property type="entry name" value="HELICc"/>
    <property type="match status" value="1"/>
</dbReference>
<dbReference type="SUPFAM" id="SSF52540">
    <property type="entry name" value="P-loop containing nucleoside triphosphate hydrolases"/>
    <property type="match status" value="1"/>
</dbReference>
<dbReference type="SUPFAM" id="SSF53335">
    <property type="entry name" value="S-adenosyl-L-methionine-dependent methyltransferases"/>
    <property type="match status" value="1"/>
</dbReference>
<dbReference type="PROSITE" id="PS00690">
    <property type="entry name" value="DEAH_ATP_HELICASE"/>
    <property type="match status" value="1"/>
</dbReference>
<dbReference type="PROSITE" id="PS51192">
    <property type="entry name" value="HELICASE_ATP_BIND_1"/>
    <property type="match status" value="1"/>
</dbReference>
<dbReference type="PROSITE" id="PS51194">
    <property type="entry name" value="HELICASE_CTER"/>
    <property type="match status" value="1"/>
</dbReference>
<accession>P0C9A3</accession>
<name>H962L_ASFWA</name>